<keyword id="KW-1003">Cell membrane</keyword>
<keyword id="KW-0297">G-protein coupled receptor</keyword>
<keyword id="KW-0325">Glycoprotein</keyword>
<keyword id="KW-0472">Membrane</keyword>
<keyword id="KW-0675">Receptor</keyword>
<keyword id="KW-1185">Reference proteome</keyword>
<keyword id="KW-0807">Transducer</keyword>
<keyword id="KW-0812">Transmembrane</keyword>
<keyword id="KW-1133">Transmembrane helix</keyword>
<feature type="chain" id="PRO_0000069625" description="Probable G-protein coupled receptor 148">
    <location>
        <begin position="1"/>
        <end position="347"/>
    </location>
</feature>
<feature type="topological domain" description="Extracellular" evidence="1">
    <location>
        <begin position="1"/>
        <end position="51"/>
    </location>
</feature>
<feature type="transmembrane region" description="Helical; Name=1" evidence="1">
    <location>
        <begin position="52"/>
        <end position="72"/>
    </location>
</feature>
<feature type="topological domain" description="Cytoplasmic" evidence="1">
    <location>
        <begin position="73"/>
        <end position="85"/>
    </location>
</feature>
<feature type="transmembrane region" description="Helical; Name=2" evidence="1">
    <location>
        <begin position="86"/>
        <end position="106"/>
    </location>
</feature>
<feature type="topological domain" description="Extracellular" evidence="1">
    <location>
        <begin position="107"/>
        <end position="130"/>
    </location>
</feature>
<feature type="transmembrane region" description="Helical; Name=3" evidence="1">
    <location>
        <begin position="131"/>
        <end position="151"/>
    </location>
</feature>
<feature type="topological domain" description="Cytoplasmic" evidence="1">
    <location>
        <begin position="152"/>
        <end position="165"/>
    </location>
</feature>
<feature type="transmembrane region" description="Helical; Name=4" evidence="1">
    <location>
        <begin position="166"/>
        <end position="186"/>
    </location>
</feature>
<feature type="topological domain" description="Extracellular" evidence="1">
    <location>
        <begin position="187"/>
        <end position="214"/>
    </location>
</feature>
<feature type="transmembrane region" description="Helical; Name=5" evidence="1">
    <location>
        <begin position="215"/>
        <end position="235"/>
    </location>
</feature>
<feature type="topological domain" description="Cytoplasmic" evidence="1">
    <location>
        <begin position="236"/>
        <end position="261"/>
    </location>
</feature>
<feature type="transmembrane region" description="Helical; Name=6" evidence="1">
    <location>
        <begin position="262"/>
        <end position="282"/>
    </location>
</feature>
<feature type="topological domain" description="Extracellular" evidence="1">
    <location>
        <begin position="283"/>
        <end position="299"/>
    </location>
</feature>
<feature type="transmembrane region" description="Helical; Name=7" evidence="1">
    <location>
        <begin position="300"/>
        <end position="322"/>
    </location>
</feature>
<feature type="topological domain" description="Cytoplasmic" evidence="1">
    <location>
        <begin position="323"/>
        <end position="347"/>
    </location>
</feature>
<feature type="glycosylation site" description="N-linked (GlcNAc...) asparagine" evidence="1">
    <location>
        <position position="34"/>
    </location>
</feature>
<feature type="sequence variant" id="VAR_049403" description="In dbSNP:rs272128." evidence="3 4 5 6">
    <original>T</original>
    <variation>P</variation>
    <location>
        <position position="317"/>
    </location>
</feature>
<feature type="sequence conflict" description="In Ref. 2; AAP34196." evidence="7" ref="2">
    <original>CMPQAASNTSLGLGDLRVPSSMLYWLFLPSSLLAAA</original>
    <variation>SS</variation>
    <location>
        <begin position="27"/>
        <end position="62"/>
    </location>
</feature>
<feature type="sequence conflict" description="In Ref. 2; AAP34196." evidence="7" ref="2">
    <original>A</original>
    <variation>D</variation>
    <location>
        <position position="130"/>
    </location>
</feature>
<feature type="sequence conflict" description="In Ref. 2; AAP34196." evidence="7" ref="2">
    <original>S</original>
    <variation>F</variation>
    <location>
        <position position="138"/>
    </location>
</feature>
<feature type="sequence conflict" description="In Ref. 2; AAP34196." evidence="7" ref="2">
    <original>A</original>
    <variation>G</variation>
    <location>
        <position position="141"/>
    </location>
</feature>
<feature type="sequence conflict" description="In Ref. 2; AAP34196." evidence="7" ref="2">
    <original>R</original>
    <variation>G</variation>
    <location>
        <position position="155"/>
    </location>
</feature>
<feature type="sequence conflict" description="In Ref. 2; AAP34196." evidence="7" ref="2">
    <original>A</original>
    <variation>P</variation>
    <location>
        <position position="168"/>
    </location>
</feature>
<feature type="sequence conflict" description="In Ref. 2; AAP34196." evidence="7" ref="2">
    <original>L</original>
    <variation>F</variation>
    <location>
        <position position="171"/>
    </location>
</feature>
<feature type="sequence conflict" description="In Ref. 2; AAP34196." evidence="7" ref="2">
    <original>A</original>
    <variation>V</variation>
    <location>
        <position position="199"/>
    </location>
</feature>
<feature type="sequence conflict" description="In Ref. 2; AAP34196." evidence="7" ref="2">
    <original>L</original>
    <variation>F</variation>
    <location>
        <position position="215"/>
    </location>
</feature>
<sequence>MGDELAPCPVGTTAWPALIQLISKTPCMPQAASNTSLGLGDLRVPSSMLYWLFLPSSLLAAATLAVSPLLLVTILRNQRLRQEPHYLLPANILLSDLAYILLHMLISSSSLGGWELGRMACGILTDAVFAACTSTILSFTAIVLHTYLAVIHPLRYLSFMSHGAAWKAVALIWLVACCFPTFLIWLSKWQDAQLEEQGASYILPPSMGTQPGCGLLVIVTYTSILCVLFLCTALIANCFWRIYAEAKTSGIWGQGYSRARGTLLIHSVLITLYVSTGVVFSLDMVLTRYHHIDSGTHTWLLAANSEVLMMLPRAMLTYLYLLRYRQLLGMVRGHLPSRRHQAIFTIS</sequence>
<name>GP148_HUMAN</name>
<comment type="function">
    <text>Orphan receptor.</text>
</comment>
<comment type="interaction">
    <interactant intactId="EBI-17294222">
        <id>Q8TDV2</id>
    </interactant>
    <interactant intactId="EBI-14890134">
        <id>Q2M3D2</id>
        <label>EXOC3L2</label>
    </interactant>
    <organismsDiffer>false</organismsDiffer>
    <experiments>3</experiments>
</comment>
<comment type="subcellular location">
    <subcellularLocation>
        <location>Cell membrane</location>
        <topology>Multi-pass membrane protein</topology>
    </subcellularLocation>
</comment>
<comment type="tissue specificity">
    <text evidence="5">Expression restricted to nervous system and testis. Is also detected in several tumors types, most notably prostate cancer.</text>
</comment>
<comment type="similarity">
    <text evidence="2">Belongs to the G-protein coupled receptor 1 family.</text>
</comment>
<evidence type="ECO:0000255" key="1"/>
<evidence type="ECO:0000255" key="2">
    <source>
        <dbReference type="PROSITE-ProRule" id="PRU00521"/>
    </source>
</evidence>
<evidence type="ECO:0000269" key="3">
    <source>
    </source>
</evidence>
<evidence type="ECO:0000269" key="4">
    <source>
    </source>
</evidence>
<evidence type="ECO:0000269" key="5">
    <source>
    </source>
</evidence>
<evidence type="ECO:0000269" key="6">
    <source ref="3"/>
</evidence>
<evidence type="ECO:0000305" key="7"/>
<organism>
    <name type="scientific">Homo sapiens</name>
    <name type="common">Human</name>
    <dbReference type="NCBI Taxonomy" id="9606"/>
    <lineage>
        <taxon>Eukaryota</taxon>
        <taxon>Metazoa</taxon>
        <taxon>Chordata</taxon>
        <taxon>Craniata</taxon>
        <taxon>Vertebrata</taxon>
        <taxon>Euteleostomi</taxon>
        <taxon>Mammalia</taxon>
        <taxon>Eutheria</taxon>
        <taxon>Euarchontoglires</taxon>
        <taxon>Primates</taxon>
        <taxon>Haplorrhini</taxon>
        <taxon>Catarrhini</taxon>
        <taxon>Hominidae</taxon>
        <taxon>Homo</taxon>
    </lineage>
</organism>
<dbReference type="EMBL" id="AB083589">
    <property type="protein sequence ID" value="BAB89302.1"/>
    <property type="molecule type" value="Genomic_DNA"/>
</dbReference>
<dbReference type="EMBL" id="AY280965">
    <property type="protein sequence ID" value="AAP34196.1"/>
    <property type="molecule type" value="mRNA"/>
</dbReference>
<dbReference type="EMBL" id="AY569570">
    <property type="protein sequence ID" value="AAS76892.1"/>
    <property type="molecule type" value="mRNA"/>
</dbReference>
<dbReference type="EMBL" id="AC140481">
    <property type="status" value="NOT_ANNOTATED_CDS"/>
    <property type="molecule type" value="Genomic_DNA"/>
</dbReference>
<dbReference type="EMBL" id="BC105013">
    <property type="protein sequence ID" value="AAI05014.1"/>
    <property type="molecule type" value="mRNA"/>
</dbReference>
<dbReference type="EMBL" id="BC105041">
    <property type="protein sequence ID" value="AAI05042.1"/>
    <property type="molecule type" value="mRNA"/>
</dbReference>
<dbReference type="EMBL" id="AY255532">
    <property type="protein sequence ID" value="AAO85044.1"/>
    <property type="molecule type" value="mRNA"/>
</dbReference>
<dbReference type="CCDS" id="CCDS2163.1"/>
<dbReference type="RefSeq" id="NP_997247.2">
    <property type="nucleotide sequence ID" value="NM_207364.2"/>
</dbReference>
<dbReference type="SMR" id="Q8TDV2"/>
<dbReference type="BioGRID" id="131308">
    <property type="interactions" value="18"/>
</dbReference>
<dbReference type="FunCoup" id="Q8TDV2">
    <property type="interactions" value="694"/>
</dbReference>
<dbReference type="IntAct" id="Q8TDV2">
    <property type="interactions" value="2"/>
</dbReference>
<dbReference type="STRING" id="9606.ENSP00000308908"/>
<dbReference type="ChEMBL" id="CHEMBL4523901"/>
<dbReference type="GlyCosmos" id="Q8TDV2">
    <property type="glycosylation" value="1 site, No reported glycans"/>
</dbReference>
<dbReference type="GlyGen" id="Q8TDV2">
    <property type="glycosylation" value="1 site"/>
</dbReference>
<dbReference type="iPTMnet" id="Q8TDV2"/>
<dbReference type="PhosphoSitePlus" id="Q8TDV2"/>
<dbReference type="BioMuta" id="GPR148"/>
<dbReference type="DMDM" id="311033389"/>
<dbReference type="PaxDb" id="9606-ENSP00000308908"/>
<dbReference type="PeptideAtlas" id="Q8TDV2"/>
<dbReference type="Antibodypedia" id="18608">
    <property type="antibodies" value="57 antibodies from 18 providers"/>
</dbReference>
<dbReference type="DNASU" id="344561"/>
<dbReference type="Ensembl" id="ENST00000309926.4">
    <property type="protein sequence ID" value="ENSP00000308908.4"/>
    <property type="gene ID" value="ENSG00000173302.5"/>
</dbReference>
<dbReference type="GeneID" id="344561"/>
<dbReference type="KEGG" id="hsa:344561"/>
<dbReference type="MANE-Select" id="ENST00000309926.4">
    <property type="protein sequence ID" value="ENSP00000308908.4"/>
    <property type="RefSeq nucleotide sequence ID" value="NM_207364.2"/>
    <property type="RefSeq protein sequence ID" value="NP_997247.2"/>
</dbReference>
<dbReference type="UCSC" id="uc002trv.2">
    <property type="organism name" value="human"/>
</dbReference>
<dbReference type="AGR" id="HGNC:23623"/>
<dbReference type="CTD" id="344561"/>
<dbReference type="GeneCards" id="GPR148"/>
<dbReference type="HGNC" id="HGNC:23623">
    <property type="gene designation" value="GPR148"/>
</dbReference>
<dbReference type="HPA" id="ENSG00000173302">
    <property type="expression patterns" value="Not detected"/>
</dbReference>
<dbReference type="neXtProt" id="NX_Q8TDV2"/>
<dbReference type="OpenTargets" id="ENSG00000173302"/>
<dbReference type="PharmGKB" id="PA134942667"/>
<dbReference type="VEuPathDB" id="HostDB:ENSG00000173302"/>
<dbReference type="eggNOG" id="KOG3656">
    <property type="taxonomic scope" value="Eukaryota"/>
</dbReference>
<dbReference type="GeneTree" id="ENSGT01130000278335"/>
<dbReference type="HOGENOM" id="CLU_067256_0_0_1"/>
<dbReference type="InParanoid" id="Q8TDV2"/>
<dbReference type="OMA" id="CYIRLYM"/>
<dbReference type="OrthoDB" id="8856247at2759"/>
<dbReference type="PAN-GO" id="Q8TDV2">
    <property type="GO annotations" value="4 GO annotations based on evolutionary models"/>
</dbReference>
<dbReference type="PhylomeDB" id="Q8TDV2"/>
<dbReference type="TreeFam" id="TF333617"/>
<dbReference type="PathwayCommons" id="Q8TDV2"/>
<dbReference type="BioGRID-ORCS" id="344561">
    <property type="hits" value="10 hits in 1137 CRISPR screens"/>
</dbReference>
<dbReference type="GeneWiki" id="GPR148"/>
<dbReference type="GenomeRNAi" id="344561"/>
<dbReference type="Pharos" id="Q8TDV2">
    <property type="development level" value="Tbio"/>
</dbReference>
<dbReference type="PRO" id="PR:Q8TDV2"/>
<dbReference type="Proteomes" id="UP000005640">
    <property type="component" value="Chromosome 2"/>
</dbReference>
<dbReference type="RNAct" id="Q8TDV2">
    <property type="molecule type" value="protein"/>
</dbReference>
<dbReference type="Bgee" id="ENSG00000173302">
    <property type="expression patterns" value="Expressed in islet of Langerhans and 14 other cell types or tissues"/>
</dbReference>
<dbReference type="GO" id="GO:0016020">
    <property type="term" value="C:membrane"/>
    <property type="evidence" value="ECO:0000318"/>
    <property type="project" value="GO_Central"/>
</dbReference>
<dbReference type="GO" id="GO:0005886">
    <property type="term" value="C:plasma membrane"/>
    <property type="evidence" value="ECO:0000314"/>
    <property type="project" value="HPA"/>
</dbReference>
<dbReference type="GO" id="GO:0004930">
    <property type="term" value="F:G protein-coupled receptor activity"/>
    <property type="evidence" value="ECO:0007669"/>
    <property type="project" value="UniProtKB-KW"/>
</dbReference>
<dbReference type="GO" id="GO:0005549">
    <property type="term" value="F:odorant binding"/>
    <property type="evidence" value="ECO:0000318"/>
    <property type="project" value="GO_Central"/>
</dbReference>
<dbReference type="GO" id="GO:0004984">
    <property type="term" value="F:olfactory receptor activity"/>
    <property type="evidence" value="ECO:0000318"/>
    <property type="project" value="GO_Central"/>
</dbReference>
<dbReference type="GO" id="GO:0050911">
    <property type="term" value="P:detection of chemical stimulus involved in sensory perception of smell"/>
    <property type="evidence" value="ECO:0000318"/>
    <property type="project" value="GO_Central"/>
</dbReference>
<dbReference type="CDD" id="cd00637">
    <property type="entry name" value="7tm_classA_rhodopsin-like"/>
    <property type="match status" value="1"/>
</dbReference>
<dbReference type="Gene3D" id="1.20.1070.10">
    <property type="entry name" value="Rhodopsin 7-helix transmembrane proteins"/>
    <property type="match status" value="1"/>
</dbReference>
<dbReference type="InterPro" id="IPR052921">
    <property type="entry name" value="GPCR1_Superfamily_Member"/>
</dbReference>
<dbReference type="InterPro" id="IPR000276">
    <property type="entry name" value="GPCR_Rhodpsn"/>
</dbReference>
<dbReference type="InterPro" id="IPR017452">
    <property type="entry name" value="GPCR_Rhodpsn_7TM"/>
</dbReference>
<dbReference type="PANTHER" id="PTHR26451:SF928">
    <property type="entry name" value="G-PROTEIN COUPLED RECEPTOR 148-RELATED"/>
    <property type="match status" value="1"/>
</dbReference>
<dbReference type="PANTHER" id="PTHR26451">
    <property type="entry name" value="G_PROTEIN_RECEP_F1_2 DOMAIN-CONTAINING PROTEIN"/>
    <property type="match status" value="1"/>
</dbReference>
<dbReference type="Pfam" id="PF00001">
    <property type="entry name" value="7tm_1"/>
    <property type="match status" value="1"/>
</dbReference>
<dbReference type="SUPFAM" id="SSF81321">
    <property type="entry name" value="Family A G protein-coupled receptor-like"/>
    <property type="match status" value="1"/>
</dbReference>
<dbReference type="PROSITE" id="PS50262">
    <property type="entry name" value="G_PROTEIN_RECEP_F1_2"/>
    <property type="match status" value="1"/>
</dbReference>
<protein>
    <recommendedName>
        <fullName>Probable G-protein coupled receptor 148</fullName>
    </recommendedName>
    <alternativeName>
        <fullName>Brain and testis restricted GPCR</fullName>
    </alternativeName>
    <alternativeName>
        <fullName>G-protein coupled receptor PGR6</fullName>
    </alternativeName>
</protein>
<proteinExistence type="evidence at protein level"/>
<accession>Q8TDV2</accession>
<accession>Q2M369</accession>
<accession>Q86SP7</accession>
<accession>Q86U87</accession>
<reference key="1">
    <citation type="journal article" date="2002" name="FEBS Lett.">
        <title>Identification of G protein-coupled receptor genes from the human genome sequence.</title>
        <authorList>
            <person name="Takeda S."/>
            <person name="Kadowaki S."/>
            <person name="Haga T."/>
            <person name="Takaesu H."/>
            <person name="Mitaku S."/>
        </authorList>
    </citation>
    <scope>NUCLEOTIDE SEQUENCE [GENOMIC DNA]</scope>
    <scope>VARIANT PRO-317</scope>
</reference>
<reference key="2">
    <citation type="journal article" date="2004" name="Genet. Mol. Res.">
        <title>A novel human G protein-coupled receptor is over-expressed in prostate cancer.</title>
        <authorList>
            <person name="Parmigiani R.B."/>
            <person name="Magalhaes G.S."/>
            <person name="Galante P.A.F."/>
            <person name="Manzini C.V.B."/>
            <person name="Camargo A.A."/>
            <person name="Malnic B."/>
        </authorList>
    </citation>
    <scope>NUCLEOTIDE SEQUENCE [MRNA]</scope>
    <scope>TISSUE SPECIFICITY</scope>
    <scope>VARIANT PRO-317</scope>
</reference>
<reference key="3">
    <citation type="submission" date="2004-03" db="EMBL/GenBank/DDBJ databases">
        <title>Complete coding sequence of GPR148.</title>
        <authorList>
            <person name="Bonner T.I."/>
            <person name="Nagle J.W."/>
            <person name="Kauffman D."/>
        </authorList>
    </citation>
    <scope>NUCLEOTIDE SEQUENCE [MRNA]</scope>
    <scope>VARIANT PRO-317</scope>
    <source>
        <tissue>Brain</tissue>
    </source>
</reference>
<reference key="4">
    <citation type="journal article" date="2005" name="Nature">
        <title>Generation and annotation of the DNA sequences of human chromosomes 2 and 4.</title>
        <authorList>
            <person name="Hillier L.W."/>
            <person name="Graves T.A."/>
            <person name="Fulton R.S."/>
            <person name="Fulton L.A."/>
            <person name="Pepin K.H."/>
            <person name="Minx P."/>
            <person name="Wagner-McPherson C."/>
            <person name="Layman D."/>
            <person name="Wylie K."/>
            <person name="Sekhon M."/>
            <person name="Becker M.C."/>
            <person name="Fewell G.A."/>
            <person name="Delehaunty K.D."/>
            <person name="Miner T.L."/>
            <person name="Nash W.E."/>
            <person name="Kremitzki C."/>
            <person name="Oddy L."/>
            <person name="Du H."/>
            <person name="Sun H."/>
            <person name="Bradshaw-Cordum H."/>
            <person name="Ali J."/>
            <person name="Carter J."/>
            <person name="Cordes M."/>
            <person name="Harris A."/>
            <person name="Isak A."/>
            <person name="van Brunt A."/>
            <person name="Nguyen C."/>
            <person name="Du F."/>
            <person name="Courtney L."/>
            <person name="Kalicki J."/>
            <person name="Ozersky P."/>
            <person name="Abbott S."/>
            <person name="Armstrong J."/>
            <person name="Belter E.A."/>
            <person name="Caruso L."/>
            <person name="Cedroni M."/>
            <person name="Cotton M."/>
            <person name="Davidson T."/>
            <person name="Desai A."/>
            <person name="Elliott G."/>
            <person name="Erb T."/>
            <person name="Fronick C."/>
            <person name="Gaige T."/>
            <person name="Haakenson W."/>
            <person name="Haglund K."/>
            <person name="Holmes A."/>
            <person name="Harkins R."/>
            <person name="Kim K."/>
            <person name="Kruchowski S.S."/>
            <person name="Strong C.M."/>
            <person name="Grewal N."/>
            <person name="Goyea E."/>
            <person name="Hou S."/>
            <person name="Levy A."/>
            <person name="Martinka S."/>
            <person name="Mead K."/>
            <person name="McLellan M.D."/>
            <person name="Meyer R."/>
            <person name="Randall-Maher J."/>
            <person name="Tomlinson C."/>
            <person name="Dauphin-Kohlberg S."/>
            <person name="Kozlowicz-Reilly A."/>
            <person name="Shah N."/>
            <person name="Swearengen-Shahid S."/>
            <person name="Snider J."/>
            <person name="Strong J.T."/>
            <person name="Thompson J."/>
            <person name="Yoakum M."/>
            <person name="Leonard S."/>
            <person name="Pearman C."/>
            <person name="Trani L."/>
            <person name="Radionenko M."/>
            <person name="Waligorski J.E."/>
            <person name="Wang C."/>
            <person name="Rock S.M."/>
            <person name="Tin-Wollam A.-M."/>
            <person name="Maupin R."/>
            <person name="Latreille P."/>
            <person name="Wendl M.C."/>
            <person name="Yang S.-P."/>
            <person name="Pohl C."/>
            <person name="Wallis J.W."/>
            <person name="Spieth J."/>
            <person name="Bieri T.A."/>
            <person name="Berkowicz N."/>
            <person name="Nelson J.O."/>
            <person name="Osborne J."/>
            <person name="Ding L."/>
            <person name="Meyer R."/>
            <person name="Sabo A."/>
            <person name="Shotland Y."/>
            <person name="Sinha P."/>
            <person name="Wohldmann P.E."/>
            <person name="Cook L.L."/>
            <person name="Hickenbotham M.T."/>
            <person name="Eldred J."/>
            <person name="Williams D."/>
            <person name="Jones T.A."/>
            <person name="She X."/>
            <person name="Ciccarelli F.D."/>
            <person name="Izaurralde E."/>
            <person name="Taylor J."/>
            <person name="Schmutz J."/>
            <person name="Myers R.M."/>
            <person name="Cox D.R."/>
            <person name="Huang X."/>
            <person name="McPherson J.D."/>
            <person name="Mardis E.R."/>
            <person name="Clifton S.W."/>
            <person name="Warren W.C."/>
            <person name="Chinwalla A.T."/>
            <person name="Eddy S.R."/>
            <person name="Marra M.A."/>
            <person name="Ovcharenko I."/>
            <person name="Furey T.S."/>
            <person name="Miller W."/>
            <person name="Eichler E.E."/>
            <person name="Bork P."/>
            <person name="Suyama M."/>
            <person name="Torrents D."/>
            <person name="Waterston R.H."/>
            <person name="Wilson R.K."/>
        </authorList>
    </citation>
    <scope>NUCLEOTIDE SEQUENCE [LARGE SCALE GENOMIC DNA]</scope>
</reference>
<reference key="5">
    <citation type="journal article" date="2004" name="Genome Res.">
        <title>The status, quality, and expansion of the NIH full-length cDNA project: the Mammalian Gene Collection (MGC).</title>
        <authorList>
            <consortium name="The MGC Project Team"/>
        </authorList>
    </citation>
    <scope>NUCLEOTIDE SEQUENCE [LARGE SCALE MRNA]</scope>
    <scope>VARIANT PRO-317</scope>
    <source>
        <tissue>Brain</tissue>
    </source>
</reference>
<reference key="6">
    <citation type="journal article" date="2003" name="Proc. Natl. Acad. Sci. U.S.A.">
        <title>The G protein-coupled receptor repertoires of human and mouse.</title>
        <authorList>
            <person name="Vassilatis D.K."/>
            <person name="Hohmann J.G."/>
            <person name="Zeng H."/>
            <person name="Li F."/>
            <person name="Ranchalis J.E."/>
            <person name="Mortrud M.T."/>
            <person name="Brown A."/>
            <person name="Rodriguez S.S."/>
            <person name="Weller J.R."/>
            <person name="Wright A.C."/>
            <person name="Bergmann J.E."/>
            <person name="Gaitanaris G.A."/>
        </authorList>
    </citation>
    <scope>NUCLEOTIDE SEQUENCE [LARGE SCALE MRNA] OF 63-279</scope>
</reference>
<gene>
    <name type="primary">GPR148</name>
    <name type="synonym">BTR</name>
    <name type="synonym">PGR6</name>
</gene>